<accession>A5WCD6</accession>
<reference key="1">
    <citation type="submission" date="2007-05" db="EMBL/GenBank/DDBJ databases">
        <title>Complete sequence of chromosome of Psychrobacter sp. PRwf-1.</title>
        <authorList>
            <consortium name="US DOE Joint Genome Institute"/>
            <person name="Copeland A."/>
            <person name="Lucas S."/>
            <person name="Lapidus A."/>
            <person name="Barry K."/>
            <person name="Detter J.C."/>
            <person name="Glavina del Rio T."/>
            <person name="Hammon N."/>
            <person name="Israni S."/>
            <person name="Dalin E."/>
            <person name="Tice H."/>
            <person name="Pitluck S."/>
            <person name="Chain P."/>
            <person name="Malfatti S."/>
            <person name="Shin M."/>
            <person name="Vergez L."/>
            <person name="Schmutz J."/>
            <person name="Larimer F."/>
            <person name="Land M."/>
            <person name="Hauser L."/>
            <person name="Kyrpides N."/>
            <person name="Kim E."/>
            <person name="Tiedje J."/>
            <person name="Richardson P."/>
        </authorList>
    </citation>
    <scope>NUCLEOTIDE SEQUENCE [LARGE SCALE GENOMIC DNA]</scope>
    <source>
        <strain>PRwf-1</strain>
    </source>
</reference>
<name>LEPA_PSYWF</name>
<proteinExistence type="inferred from homology"/>
<comment type="function">
    <text evidence="1">Required for accurate and efficient protein synthesis under certain stress conditions. May act as a fidelity factor of the translation reaction, by catalyzing a one-codon backward translocation of tRNAs on improperly translocated ribosomes. Back-translocation proceeds from a post-translocation (POST) complex to a pre-translocation (PRE) complex, thus giving elongation factor G a second chance to translocate the tRNAs correctly. Binds to ribosomes in a GTP-dependent manner.</text>
</comment>
<comment type="catalytic activity">
    <reaction evidence="1">
        <text>GTP + H2O = GDP + phosphate + H(+)</text>
        <dbReference type="Rhea" id="RHEA:19669"/>
        <dbReference type="ChEBI" id="CHEBI:15377"/>
        <dbReference type="ChEBI" id="CHEBI:15378"/>
        <dbReference type="ChEBI" id="CHEBI:37565"/>
        <dbReference type="ChEBI" id="CHEBI:43474"/>
        <dbReference type="ChEBI" id="CHEBI:58189"/>
        <dbReference type="EC" id="3.6.5.n1"/>
    </reaction>
</comment>
<comment type="subcellular location">
    <subcellularLocation>
        <location evidence="1">Cell inner membrane</location>
        <topology evidence="1">Peripheral membrane protein</topology>
        <orientation evidence="1">Cytoplasmic side</orientation>
    </subcellularLocation>
</comment>
<comment type="similarity">
    <text evidence="1">Belongs to the TRAFAC class translation factor GTPase superfamily. Classic translation factor GTPase family. LepA subfamily.</text>
</comment>
<organism>
    <name type="scientific">Psychrobacter sp. (strain PRwf-1)</name>
    <dbReference type="NCBI Taxonomy" id="349106"/>
    <lineage>
        <taxon>Bacteria</taxon>
        <taxon>Pseudomonadati</taxon>
        <taxon>Pseudomonadota</taxon>
        <taxon>Gammaproteobacteria</taxon>
        <taxon>Moraxellales</taxon>
        <taxon>Moraxellaceae</taxon>
        <taxon>Psychrobacter</taxon>
    </lineage>
</organism>
<dbReference type="EC" id="3.6.5.n1" evidence="1"/>
<dbReference type="EMBL" id="CP000713">
    <property type="protein sequence ID" value="ABQ93327.1"/>
    <property type="molecule type" value="Genomic_DNA"/>
</dbReference>
<dbReference type="SMR" id="A5WCD6"/>
<dbReference type="STRING" id="349106.PsycPRwf_0372"/>
<dbReference type="KEGG" id="prw:PsycPRwf_0372"/>
<dbReference type="eggNOG" id="COG0481">
    <property type="taxonomic scope" value="Bacteria"/>
</dbReference>
<dbReference type="HOGENOM" id="CLU_009995_3_3_6"/>
<dbReference type="GO" id="GO:0005886">
    <property type="term" value="C:plasma membrane"/>
    <property type="evidence" value="ECO:0007669"/>
    <property type="project" value="UniProtKB-SubCell"/>
</dbReference>
<dbReference type="GO" id="GO:0005525">
    <property type="term" value="F:GTP binding"/>
    <property type="evidence" value="ECO:0007669"/>
    <property type="project" value="UniProtKB-UniRule"/>
</dbReference>
<dbReference type="GO" id="GO:0003924">
    <property type="term" value="F:GTPase activity"/>
    <property type="evidence" value="ECO:0007669"/>
    <property type="project" value="UniProtKB-UniRule"/>
</dbReference>
<dbReference type="GO" id="GO:0097216">
    <property type="term" value="F:guanosine tetraphosphate binding"/>
    <property type="evidence" value="ECO:0007669"/>
    <property type="project" value="UniProtKB-ARBA"/>
</dbReference>
<dbReference type="GO" id="GO:0043022">
    <property type="term" value="F:ribosome binding"/>
    <property type="evidence" value="ECO:0007669"/>
    <property type="project" value="UniProtKB-UniRule"/>
</dbReference>
<dbReference type="GO" id="GO:0003746">
    <property type="term" value="F:translation elongation factor activity"/>
    <property type="evidence" value="ECO:0007669"/>
    <property type="project" value="UniProtKB-UniRule"/>
</dbReference>
<dbReference type="GO" id="GO:0045727">
    <property type="term" value="P:positive regulation of translation"/>
    <property type="evidence" value="ECO:0007669"/>
    <property type="project" value="UniProtKB-UniRule"/>
</dbReference>
<dbReference type="CDD" id="cd03699">
    <property type="entry name" value="EF4_II"/>
    <property type="match status" value="1"/>
</dbReference>
<dbReference type="CDD" id="cd16260">
    <property type="entry name" value="EF4_III"/>
    <property type="match status" value="1"/>
</dbReference>
<dbReference type="CDD" id="cd01890">
    <property type="entry name" value="LepA"/>
    <property type="match status" value="1"/>
</dbReference>
<dbReference type="CDD" id="cd03709">
    <property type="entry name" value="lepA_C"/>
    <property type="match status" value="1"/>
</dbReference>
<dbReference type="FunFam" id="3.40.50.300:FF:000078">
    <property type="entry name" value="Elongation factor 4"/>
    <property type="match status" value="1"/>
</dbReference>
<dbReference type="FunFam" id="2.40.30.10:FF:000015">
    <property type="entry name" value="Translation factor GUF1, mitochondrial"/>
    <property type="match status" value="1"/>
</dbReference>
<dbReference type="FunFam" id="3.30.70.240:FF:000007">
    <property type="entry name" value="Translation factor GUF1, mitochondrial"/>
    <property type="match status" value="1"/>
</dbReference>
<dbReference type="FunFam" id="3.30.70.2570:FF:000001">
    <property type="entry name" value="Translation factor GUF1, mitochondrial"/>
    <property type="match status" value="1"/>
</dbReference>
<dbReference type="FunFam" id="3.30.70.870:FF:000004">
    <property type="entry name" value="Translation factor GUF1, mitochondrial"/>
    <property type="match status" value="1"/>
</dbReference>
<dbReference type="Gene3D" id="3.30.70.240">
    <property type="match status" value="1"/>
</dbReference>
<dbReference type="Gene3D" id="3.30.70.2570">
    <property type="entry name" value="Elongation factor 4, C-terminal domain"/>
    <property type="match status" value="1"/>
</dbReference>
<dbReference type="Gene3D" id="3.30.70.870">
    <property type="entry name" value="Elongation Factor G (Translational Gtpase), domain 3"/>
    <property type="match status" value="1"/>
</dbReference>
<dbReference type="Gene3D" id="3.40.50.300">
    <property type="entry name" value="P-loop containing nucleotide triphosphate hydrolases"/>
    <property type="match status" value="1"/>
</dbReference>
<dbReference type="Gene3D" id="2.40.30.10">
    <property type="entry name" value="Translation factors"/>
    <property type="match status" value="1"/>
</dbReference>
<dbReference type="HAMAP" id="MF_00071">
    <property type="entry name" value="LepA"/>
    <property type="match status" value="1"/>
</dbReference>
<dbReference type="InterPro" id="IPR006297">
    <property type="entry name" value="EF-4"/>
</dbReference>
<dbReference type="InterPro" id="IPR035647">
    <property type="entry name" value="EFG_III/V"/>
</dbReference>
<dbReference type="InterPro" id="IPR000640">
    <property type="entry name" value="EFG_V-like"/>
</dbReference>
<dbReference type="InterPro" id="IPR004161">
    <property type="entry name" value="EFTu-like_2"/>
</dbReference>
<dbReference type="InterPro" id="IPR031157">
    <property type="entry name" value="G_TR_CS"/>
</dbReference>
<dbReference type="InterPro" id="IPR038363">
    <property type="entry name" value="LepA_C_sf"/>
</dbReference>
<dbReference type="InterPro" id="IPR013842">
    <property type="entry name" value="LepA_CTD"/>
</dbReference>
<dbReference type="InterPro" id="IPR035654">
    <property type="entry name" value="LepA_IV"/>
</dbReference>
<dbReference type="InterPro" id="IPR027417">
    <property type="entry name" value="P-loop_NTPase"/>
</dbReference>
<dbReference type="InterPro" id="IPR005225">
    <property type="entry name" value="Small_GTP-bd"/>
</dbReference>
<dbReference type="InterPro" id="IPR000795">
    <property type="entry name" value="T_Tr_GTP-bd_dom"/>
</dbReference>
<dbReference type="NCBIfam" id="TIGR01393">
    <property type="entry name" value="lepA"/>
    <property type="match status" value="1"/>
</dbReference>
<dbReference type="NCBIfam" id="TIGR00231">
    <property type="entry name" value="small_GTP"/>
    <property type="match status" value="1"/>
</dbReference>
<dbReference type="PANTHER" id="PTHR43512:SF4">
    <property type="entry name" value="TRANSLATION FACTOR GUF1 HOMOLOG, CHLOROPLASTIC"/>
    <property type="match status" value="1"/>
</dbReference>
<dbReference type="PANTHER" id="PTHR43512">
    <property type="entry name" value="TRANSLATION FACTOR GUF1-RELATED"/>
    <property type="match status" value="1"/>
</dbReference>
<dbReference type="Pfam" id="PF00679">
    <property type="entry name" value="EFG_C"/>
    <property type="match status" value="1"/>
</dbReference>
<dbReference type="Pfam" id="PF00009">
    <property type="entry name" value="GTP_EFTU"/>
    <property type="match status" value="1"/>
</dbReference>
<dbReference type="Pfam" id="PF03144">
    <property type="entry name" value="GTP_EFTU_D2"/>
    <property type="match status" value="1"/>
</dbReference>
<dbReference type="Pfam" id="PF06421">
    <property type="entry name" value="LepA_C"/>
    <property type="match status" value="1"/>
</dbReference>
<dbReference type="PRINTS" id="PR00315">
    <property type="entry name" value="ELONGATNFCT"/>
</dbReference>
<dbReference type="SMART" id="SM00838">
    <property type="entry name" value="EFG_C"/>
    <property type="match status" value="1"/>
</dbReference>
<dbReference type="SUPFAM" id="SSF54980">
    <property type="entry name" value="EF-G C-terminal domain-like"/>
    <property type="match status" value="2"/>
</dbReference>
<dbReference type="SUPFAM" id="SSF52540">
    <property type="entry name" value="P-loop containing nucleoside triphosphate hydrolases"/>
    <property type="match status" value="1"/>
</dbReference>
<dbReference type="PROSITE" id="PS00301">
    <property type="entry name" value="G_TR_1"/>
    <property type="match status" value="1"/>
</dbReference>
<dbReference type="PROSITE" id="PS51722">
    <property type="entry name" value="G_TR_2"/>
    <property type="match status" value="1"/>
</dbReference>
<gene>
    <name evidence="1" type="primary">lepA</name>
    <name type="ordered locus">PsycPRwf_0372</name>
</gene>
<sequence length="600" mass="66768">MTALSNIRNFSIIAHIDHGKSTLADRFIQTCGALQDREMQAQVLDSMDIERERGITIKAQSVTLYYDHPNGERYQLNFIDTPGHVDFSYEVSRSLAACEGALLVVDAAQGVEAQSVANCYTAVDLGLEVLPVLNKIDLPQVEPERVIQEIEDIIGIEADDAPRVSAKSGLGVDELLEALVERIPAPTGDRDAPLQALIIDSWFDNYLGVVSLVRVRQGSLSKGDKILIKSTMDSHLVTSIGVFTPKPLETGKLEAGEVGFVIAGIKDIHGAPVGDTMTHAKTPDVDLIPGFKQITPQVYAGLFPVDSSDFEKFREALQKLQINDSALFFEPDTSDALGFGFRCGFLGMLHMEIIQERLEREYNLDLITTAPSVIYEIKKKNGEILLIDNPSRLPDPGFVEEFREPIARCHILVPQDYLGNVMTLCMERRGTQVDMRFMGKQVQLIFDIPLGEVVMDFFDRLKSVSRGFASLDYEFDRYEVDKLVKVDVLINGDKVDALAMICHQEQARYRGGQLVEKMKELIPRQMFDVAIQAAIGSQIIARSTVKAMRKDVLAKCYGGDVSRKKKLLSKQKEGKKRMKQVGSVEIPQEAFLAVLQVDNQ</sequence>
<evidence type="ECO:0000255" key="1">
    <source>
        <dbReference type="HAMAP-Rule" id="MF_00071"/>
    </source>
</evidence>
<keyword id="KW-0997">Cell inner membrane</keyword>
<keyword id="KW-1003">Cell membrane</keyword>
<keyword id="KW-0342">GTP-binding</keyword>
<keyword id="KW-0378">Hydrolase</keyword>
<keyword id="KW-0472">Membrane</keyword>
<keyword id="KW-0547">Nucleotide-binding</keyword>
<keyword id="KW-0648">Protein biosynthesis</keyword>
<protein>
    <recommendedName>
        <fullName evidence="1">Elongation factor 4</fullName>
        <shortName evidence="1">EF-4</shortName>
        <ecNumber evidence="1">3.6.5.n1</ecNumber>
    </recommendedName>
    <alternativeName>
        <fullName evidence="1">Ribosomal back-translocase LepA</fullName>
    </alternativeName>
</protein>
<feature type="chain" id="PRO_1000071181" description="Elongation factor 4">
    <location>
        <begin position="1"/>
        <end position="600"/>
    </location>
</feature>
<feature type="domain" description="tr-type G">
    <location>
        <begin position="5"/>
        <end position="187"/>
    </location>
</feature>
<feature type="binding site" evidence="1">
    <location>
        <begin position="17"/>
        <end position="22"/>
    </location>
    <ligand>
        <name>GTP</name>
        <dbReference type="ChEBI" id="CHEBI:37565"/>
    </ligand>
</feature>
<feature type="binding site" evidence="1">
    <location>
        <begin position="134"/>
        <end position="137"/>
    </location>
    <ligand>
        <name>GTP</name>
        <dbReference type="ChEBI" id="CHEBI:37565"/>
    </ligand>
</feature>